<gene>
    <name type="primary">SPT14</name>
    <name type="ORF">SCY_5555</name>
</gene>
<proteinExistence type="inferred from homology"/>
<sequence>MGFNIAMLCDFFYPQLGGVEFHIYHLSQKLIDLGHSVVIITHAYKDRVGVRHLTNGLKVYHVPFFVIFRETTFPTVFSTFPIIRNILLREQIQIVHSHGSASTFAHEGILHANTMGLRTVFTDHSLYGFNNLTSIWVNKLLTFTLTNIDRVICVSNTCKENMIVRTELSPDIISVIPNAVVSEDFKPRDPTDSTKRKQSRDKIVIVVIGRLFPNKGSDLLTRIIPKVCSSHEDVEFIVAGDGPKFIDFQQMIESHRLQKRVQLLGSVPHEKVRDVLCQGDIYLHASLTEAFGTILVEAASCNLLIVTTQVGGIPEVLPNEMTVYAEQTSVSDLVQATNKAINIIRSKALDTSSFHDSVSKMYDWMDVAKRTVEIYTNISSTSSADDKDWMKMVANLYKRDGIWAKHLYLLCGIVEYMLFFLLEWLYPRDEIDLAPKWPKKSVSNETKEARET</sequence>
<dbReference type="EC" id="2.4.1.198"/>
<dbReference type="EMBL" id="AAFW02000135">
    <property type="protein sequence ID" value="EDN60970.1"/>
    <property type="molecule type" value="Genomic_DNA"/>
</dbReference>
<dbReference type="SMR" id="A6ZW78"/>
<dbReference type="HOGENOM" id="CLU_009583_19_0_1"/>
<dbReference type="UniPathway" id="UPA00196"/>
<dbReference type="Proteomes" id="UP000007060">
    <property type="component" value="Unassembled WGS sequence"/>
</dbReference>
<dbReference type="GO" id="GO:0000506">
    <property type="term" value="C:glycosylphosphatidylinositol-N-acetylglucosaminyltransferase (GPI-GnT) complex"/>
    <property type="evidence" value="ECO:0007669"/>
    <property type="project" value="InterPro"/>
</dbReference>
<dbReference type="GO" id="GO:0017176">
    <property type="term" value="F:phosphatidylinositol N-acetylglucosaminyltransferase activity"/>
    <property type="evidence" value="ECO:0007669"/>
    <property type="project" value="UniProtKB-EC"/>
</dbReference>
<dbReference type="GO" id="GO:0006506">
    <property type="term" value="P:GPI anchor biosynthetic process"/>
    <property type="evidence" value="ECO:0007669"/>
    <property type="project" value="UniProtKB-UniPathway"/>
</dbReference>
<dbReference type="CDD" id="cd03796">
    <property type="entry name" value="GT4_PIG-A-like"/>
    <property type="match status" value="1"/>
</dbReference>
<dbReference type="FunFam" id="3.40.50.2000:FF:000276">
    <property type="entry name" value="Phosphatidylinositol N-acetylglucosaminyltransferase GPI3 subunit"/>
    <property type="match status" value="1"/>
</dbReference>
<dbReference type="FunFam" id="3.40.50.2000:FF:000026">
    <property type="entry name" value="Phosphatidylinositol N-acetylglucosaminyltransferase subunit A"/>
    <property type="match status" value="1"/>
</dbReference>
<dbReference type="Gene3D" id="3.40.50.2000">
    <property type="entry name" value="Glycogen Phosphorylase B"/>
    <property type="match status" value="2"/>
</dbReference>
<dbReference type="InterPro" id="IPR001296">
    <property type="entry name" value="Glyco_trans_1"/>
</dbReference>
<dbReference type="InterPro" id="IPR039507">
    <property type="entry name" value="PIG-A/GPI3"/>
</dbReference>
<dbReference type="InterPro" id="IPR013234">
    <property type="entry name" value="PIGA_GPI_anchor_biosynthesis"/>
</dbReference>
<dbReference type="PANTHER" id="PTHR45871">
    <property type="entry name" value="N-ACETYLGLUCOSAMINYL-PHOSPHATIDYLINOSITOL BIOSYNTHETIC PROTEIN"/>
    <property type="match status" value="1"/>
</dbReference>
<dbReference type="PANTHER" id="PTHR45871:SF1">
    <property type="entry name" value="PHOSPHATIDYLINOSITOL N-ACETYLGLUCOSAMINYLTRANSFERASE SUBUNIT A"/>
    <property type="match status" value="1"/>
</dbReference>
<dbReference type="Pfam" id="PF00534">
    <property type="entry name" value="Glycos_transf_1"/>
    <property type="match status" value="1"/>
</dbReference>
<dbReference type="Pfam" id="PF08288">
    <property type="entry name" value="PIGA"/>
    <property type="match status" value="1"/>
</dbReference>
<dbReference type="SUPFAM" id="SSF53756">
    <property type="entry name" value="UDP-Glycosyltransferase/glycogen phosphorylase"/>
    <property type="match status" value="1"/>
</dbReference>
<accession>A6ZW78</accession>
<organism>
    <name type="scientific">Saccharomyces cerevisiae (strain YJM789)</name>
    <name type="common">Baker's yeast</name>
    <dbReference type="NCBI Taxonomy" id="307796"/>
    <lineage>
        <taxon>Eukaryota</taxon>
        <taxon>Fungi</taxon>
        <taxon>Dikarya</taxon>
        <taxon>Ascomycota</taxon>
        <taxon>Saccharomycotina</taxon>
        <taxon>Saccharomycetes</taxon>
        <taxon>Saccharomycetales</taxon>
        <taxon>Saccharomycetaceae</taxon>
        <taxon>Saccharomyces</taxon>
    </lineage>
</organism>
<protein>
    <recommendedName>
        <fullName>Phosphatidylinositol N-acetylglucosaminyltransferase GPI3 subunit</fullName>
        <ecNumber>2.4.1.198</ecNumber>
    </recommendedName>
    <alternativeName>
        <fullName>GlcNAc-PI synthesis protein</fullName>
    </alternativeName>
</protein>
<evidence type="ECO:0000250" key="1"/>
<evidence type="ECO:0000255" key="2"/>
<evidence type="ECO:0000305" key="3"/>
<comment type="function">
    <text evidence="1">Catalytic subunit in the complex catalyzing the transfer of N-acetylglucosamine from UDP-N-acetylglucosamine to phosphatidylinositol, the first step of GPI biosynthesis.</text>
</comment>
<comment type="catalytic activity">
    <reaction>
        <text>a 1,2-diacyl-sn-glycero-3-phospho-(1D-myo-inositol) + UDP-N-acetyl-alpha-D-glucosamine = a 6-(N-acetyl-alpha-D-glucosaminyl)-1-(1,2-diacyl-sn-glycero-3-phospho)-1D-myo-inositol + UDP + H(+)</text>
        <dbReference type="Rhea" id="RHEA:14789"/>
        <dbReference type="ChEBI" id="CHEBI:15378"/>
        <dbReference type="ChEBI" id="CHEBI:57265"/>
        <dbReference type="ChEBI" id="CHEBI:57705"/>
        <dbReference type="ChEBI" id="CHEBI:57880"/>
        <dbReference type="ChEBI" id="CHEBI:58223"/>
        <dbReference type="EC" id="2.4.1.198"/>
    </reaction>
</comment>
<comment type="activity regulation">
    <text evidence="1">Inhibited by Ras, probably via the interaction between RAS2 and ERI1.</text>
</comment>
<comment type="pathway">
    <text>Glycolipid biosynthesis; glycosylphosphatidylinositol-anchor biosynthesis.</text>
</comment>
<comment type="subunit">
    <text evidence="1">Component of the phosphatidylinositol N-acetylglucosaminyltransferase complex composed of at least GPI1, GPI2, GPI3, GPI15, GPI19 and ERI1.</text>
</comment>
<comment type="subcellular location">
    <subcellularLocation>
        <location evidence="1">Endoplasmic reticulum membrane</location>
        <topology evidence="1">Single-pass membrane protein</topology>
    </subcellularLocation>
</comment>
<comment type="similarity">
    <text evidence="3">Belongs to the glycosyltransferase group 1 family.</text>
</comment>
<keyword id="KW-0256">Endoplasmic reticulum</keyword>
<keyword id="KW-0328">Glycosyltransferase</keyword>
<keyword id="KW-0337">GPI-anchor biosynthesis</keyword>
<keyword id="KW-0472">Membrane</keyword>
<keyword id="KW-0808">Transferase</keyword>
<keyword id="KW-0812">Transmembrane</keyword>
<keyword id="KW-1133">Transmembrane helix</keyword>
<reference key="1">
    <citation type="journal article" date="2007" name="Proc. Natl. Acad. Sci. U.S.A.">
        <title>Genome sequencing and comparative analysis of Saccharomyces cerevisiae strain YJM789.</title>
        <authorList>
            <person name="Wei W."/>
            <person name="McCusker J.H."/>
            <person name="Hyman R.W."/>
            <person name="Jones T."/>
            <person name="Ning Y."/>
            <person name="Cao Z."/>
            <person name="Gu Z."/>
            <person name="Bruno D."/>
            <person name="Miranda M."/>
            <person name="Nguyen M."/>
            <person name="Wilhelmy J."/>
            <person name="Komp C."/>
            <person name="Tamse R."/>
            <person name="Wang X."/>
            <person name="Jia P."/>
            <person name="Luedi P."/>
            <person name="Oefner P.J."/>
            <person name="David L."/>
            <person name="Dietrich F.S."/>
            <person name="Li Y."/>
            <person name="Davis R.W."/>
            <person name="Steinmetz L.M."/>
        </authorList>
    </citation>
    <scope>NUCLEOTIDE SEQUENCE [LARGE SCALE GENOMIC DNA]</scope>
    <source>
        <strain>YJM789</strain>
    </source>
</reference>
<name>GPI3_YEAS7</name>
<feature type="chain" id="PRO_0000377639" description="Phosphatidylinositol N-acetylglucosaminyltransferase GPI3 subunit">
    <location>
        <begin position="1"/>
        <end position="452"/>
    </location>
</feature>
<feature type="transmembrane region" description="Helical" evidence="2">
    <location>
        <begin position="407"/>
        <end position="427"/>
    </location>
</feature>